<gene>
    <name evidence="1" type="primary">hslU</name>
    <name type="ordered locus">BAV0142</name>
</gene>
<keyword id="KW-0067">ATP-binding</keyword>
<keyword id="KW-0143">Chaperone</keyword>
<keyword id="KW-0963">Cytoplasm</keyword>
<keyword id="KW-0547">Nucleotide-binding</keyword>
<keyword id="KW-1185">Reference proteome</keyword>
<name>HSLU_BORA1</name>
<sequence length="444" mass="49441">MSASTMTPGEIVSELDKYIIGQNRAKRAVAVALRNRWRRQQVADPLRHEIHPKNILMIGPTGVGKTEIARRLAKLANAPFIKIEATKFTEVGYVGRDVDTIIRDLTEFSIKQTRELEMRRVRSHAEDAAEDRILDVLVPPARNAMGEPQRDDGNTTRQTFRKRLREGSLDDLEIEIDIAQATPQLDVMTPPGMEEMAEQLRGMFAGLARDKTKPKKIKVKEAFKLIIEEEAAKRVNEDDLRAAAIANVEQNGIVFLDEIDKIAARQESGGADVSRQGVQRDLLPLVEGTTVNTRYGMVRTDHILFIASGAFHLSRPSDLIPELQGRFPIRVELDSLSADDFVRILSETDASLVKQYTALLATEDVQLAFTEDGIKRLAELAFSVNERTENIGARRLYTVMEKLLEELSFDAGASSGQSVTIDAAYVDAQLSEAASSQDLARYVL</sequence>
<accession>Q2L1D0</accession>
<comment type="function">
    <text evidence="1">ATPase subunit of a proteasome-like degradation complex; this subunit has chaperone activity. The binding of ATP and its subsequent hydrolysis by HslU are essential for unfolding of protein substrates subsequently hydrolyzed by HslV. HslU recognizes the N-terminal part of its protein substrates and unfolds these before they are guided to HslV for hydrolysis.</text>
</comment>
<comment type="subunit">
    <text evidence="1">A double ring-shaped homohexamer of HslV is capped on each side by a ring-shaped HslU homohexamer. The assembly of the HslU/HslV complex is dependent on binding of ATP.</text>
</comment>
<comment type="subcellular location">
    <subcellularLocation>
        <location evidence="1">Cytoplasm</location>
    </subcellularLocation>
</comment>
<comment type="similarity">
    <text evidence="1">Belongs to the ClpX chaperone family. HslU subfamily.</text>
</comment>
<evidence type="ECO:0000255" key="1">
    <source>
        <dbReference type="HAMAP-Rule" id="MF_00249"/>
    </source>
</evidence>
<organism>
    <name type="scientific">Bordetella avium (strain 197N)</name>
    <dbReference type="NCBI Taxonomy" id="360910"/>
    <lineage>
        <taxon>Bacteria</taxon>
        <taxon>Pseudomonadati</taxon>
        <taxon>Pseudomonadota</taxon>
        <taxon>Betaproteobacteria</taxon>
        <taxon>Burkholderiales</taxon>
        <taxon>Alcaligenaceae</taxon>
        <taxon>Bordetella</taxon>
    </lineage>
</organism>
<feature type="chain" id="PRO_1000012704" description="ATP-dependent protease ATPase subunit HslU">
    <location>
        <begin position="1"/>
        <end position="444"/>
    </location>
</feature>
<feature type="binding site" evidence="1">
    <location>
        <position position="20"/>
    </location>
    <ligand>
        <name>ATP</name>
        <dbReference type="ChEBI" id="CHEBI:30616"/>
    </ligand>
</feature>
<feature type="binding site" evidence="1">
    <location>
        <begin position="62"/>
        <end position="67"/>
    </location>
    <ligand>
        <name>ATP</name>
        <dbReference type="ChEBI" id="CHEBI:30616"/>
    </ligand>
</feature>
<feature type="binding site" evidence="1">
    <location>
        <position position="257"/>
    </location>
    <ligand>
        <name>ATP</name>
        <dbReference type="ChEBI" id="CHEBI:30616"/>
    </ligand>
</feature>
<feature type="binding site" evidence="1">
    <location>
        <position position="322"/>
    </location>
    <ligand>
        <name>ATP</name>
        <dbReference type="ChEBI" id="CHEBI:30616"/>
    </ligand>
</feature>
<feature type="binding site" evidence="1">
    <location>
        <position position="394"/>
    </location>
    <ligand>
        <name>ATP</name>
        <dbReference type="ChEBI" id="CHEBI:30616"/>
    </ligand>
</feature>
<protein>
    <recommendedName>
        <fullName evidence="1">ATP-dependent protease ATPase subunit HslU</fullName>
    </recommendedName>
    <alternativeName>
        <fullName evidence="1">Unfoldase HslU</fullName>
    </alternativeName>
</protein>
<proteinExistence type="inferred from homology"/>
<dbReference type="EMBL" id="AM167904">
    <property type="protein sequence ID" value="CAJ47748.1"/>
    <property type="molecule type" value="Genomic_DNA"/>
</dbReference>
<dbReference type="RefSeq" id="WP_012415846.1">
    <property type="nucleotide sequence ID" value="NC_010645.1"/>
</dbReference>
<dbReference type="SMR" id="Q2L1D0"/>
<dbReference type="STRING" id="360910.BAV0142"/>
<dbReference type="GeneID" id="92936612"/>
<dbReference type="KEGG" id="bav:BAV0142"/>
<dbReference type="eggNOG" id="COG1220">
    <property type="taxonomic scope" value="Bacteria"/>
</dbReference>
<dbReference type="HOGENOM" id="CLU_033123_0_0_4"/>
<dbReference type="OrthoDB" id="9804062at2"/>
<dbReference type="Proteomes" id="UP000001977">
    <property type="component" value="Chromosome"/>
</dbReference>
<dbReference type="GO" id="GO:0009376">
    <property type="term" value="C:HslUV protease complex"/>
    <property type="evidence" value="ECO:0007669"/>
    <property type="project" value="UniProtKB-UniRule"/>
</dbReference>
<dbReference type="GO" id="GO:0005524">
    <property type="term" value="F:ATP binding"/>
    <property type="evidence" value="ECO:0007669"/>
    <property type="project" value="UniProtKB-UniRule"/>
</dbReference>
<dbReference type="GO" id="GO:0016887">
    <property type="term" value="F:ATP hydrolysis activity"/>
    <property type="evidence" value="ECO:0007669"/>
    <property type="project" value="InterPro"/>
</dbReference>
<dbReference type="GO" id="GO:0008233">
    <property type="term" value="F:peptidase activity"/>
    <property type="evidence" value="ECO:0007669"/>
    <property type="project" value="InterPro"/>
</dbReference>
<dbReference type="GO" id="GO:0036402">
    <property type="term" value="F:proteasome-activating activity"/>
    <property type="evidence" value="ECO:0007669"/>
    <property type="project" value="UniProtKB-UniRule"/>
</dbReference>
<dbReference type="GO" id="GO:0043335">
    <property type="term" value="P:protein unfolding"/>
    <property type="evidence" value="ECO:0007669"/>
    <property type="project" value="UniProtKB-UniRule"/>
</dbReference>
<dbReference type="GO" id="GO:0051603">
    <property type="term" value="P:proteolysis involved in protein catabolic process"/>
    <property type="evidence" value="ECO:0007669"/>
    <property type="project" value="TreeGrafter"/>
</dbReference>
<dbReference type="CDD" id="cd19498">
    <property type="entry name" value="RecA-like_HslU"/>
    <property type="match status" value="1"/>
</dbReference>
<dbReference type="FunFam" id="1.10.8.10:FF:000028">
    <property type="entry name" value="ATP-dependent protease ATPase subunit HslU"/>
    <property type="match status" value="1"/>
</dbReference>
<dbReference type="FunFam" id="3.40.50.300:FF:000213">
    <property type="entry name" value="ATP-dependent protease ATPase subunit HslU"/>
    <property type="match status" value="1"/>
</dbReference>
<dbReference type="FunFam" id="3.40.50.300:FF:000220">
    <property type="entry name" value="ATP-dependent protease ATPase subunit HslU"/>
    <property type="match status" value="1"/>
</dbReference>
<dbReference type="Gene3D" id="1.10.8.60">
    <property type="match status" value="1"/>
</dbReference>
<dbReference type="Gene3D" id="1.10.8.10">
    <property type="entry name" value="DNA helicase RuvA subunit, C-terminal domain"/>
    <property type="match status" value="2"/>
</dbReference>
<dbReference type="Gene3D" id="3.40.50.300">
    <property type="entry name" value="P-loop containing nucleotide triphosphate hydrolases"/>
    <property type="match status" value="2"/>
</dbReference>
<dbReference type="HAMAP" id="MF_00249">
    <property type="entry name" value="HslU"/>
    <property type="match status" value="1"/>
</dbReference>
<dbReference type="InterPro" id="IPR003593">
    <property type="entry name" value="AAA+_ATPase"/>
</dbReference>
<dbReference type="InterPro" id="IPR050052">
    <property type="entry name" value="ATP-dep_Clp_protease_ClpX"/>
</dbReference>
<dbReference type="InterPro" id="IPR003959">
    <property type="entry name" value="ATPase_AAA_core"/>
</dbReference>
<dbReference type="InterPro" id="IPR019489">
    <property type="entry name" value="Clp_ATPase_C"/>
</dbReference>
<dbReference type="InterPro" id="IPR004491">
    <property type="entry name" value="HslU"/>
</dbReference>
<dbReference type="InterPro" id="IPR027417">
    <property type="entry name" value="P-loop_NTPase"/>
</dbReference>
<dbReference type="NCBIfam" id="TIGR00390">
    <property type="entry name" value="hslU"/>
    <property type="match status" value="1"/>
</dbReference>
<dbReference type="NCBIfam" id="NF003544">
    <property type="entry name" value="PRK05201.1"/>
    <property type="match status" value="1"/>
</dbReference>
<dbReference type="PANTHER" id="PTHR48102">
    <property type="entry name" value="ATP-DEPENDENT CLP PROTEASE ATP-BINDING SUBUNIT CLPX-LIKE, MITOCHONDRIAL-RELATED"/>
    <property type="match status" value="1"/>
</dbReference>
<dbReference type="PANTHER" id="PTHR48102:SF3">
    <property type="entry name" value="ATP-DEPENDENT PROTEASE ATPASE SUBUNIT HSLU"/>
    <property type="match status" value="1"/>
</dbReference>
<dbReference type="Pfam" id="PF00004">
    <property type="entry name" value="AAA"/>
    <property type="match status" value="1"/>
</dbReference>
<dbReference type="Pfam" id="PF07724">
    <property type="entry name" value="AAA_2"/>
    <property type="match status" value="1"/>
</dbReference>
<dbReference type="SMART" id="SM00382">
    <property type="entry name" value="AAA"/>
    <property type="match status" value="1"/>
</dbReference>
<dbReference type="SMART" id="SM01086">
    <property type="entry name" value="ClpB_D2-small"/>
    <property type="match status" value="1"/>
</dbReference>
<dbReference type="SUPFAM" id="SSF52540">
    <property type="entry name" value="P-loop containing nucleoside triphosphate hydrolases"/>
    <property type="match status" value="1"/>
</dbReference>
<reference key="1">
    <citation type="journal article" date="2006" name="J. Bacteriol.">
        <title>Comparison of the genome sequence of the poultry pathogen Bordetella avium with those of B. bronchiseptica, B. pertussis, and B. parapertussis reveals extensive diversity in surface structures associated with host interaction.</title>
        <authorList>
            <person name="Sebaihia M."/>
            <person name="Preston A."/>
            <person name="Maskell D.J."/>
            <person name="Kuzmiak H."/>
            <person name="Connell T.D."/>
            <person name="King N.D."/>
            <person name="Orndorff P.E."/>
            <person name="Miyamoto D.M."/>
            <person name="Thomson N.R."/>
            <person name="Harris D."/>
            <person name="Goble A."/>
            <person name="Lord A."/>
            <person name="Murphy L."/>
            <person name="Quail M.A."/>
            <person name="Rutter S."/>
            <person name="Squares R."/>
            <person name="Squares S."/>
            <person name="Woodward J."/>
            <person name="Parkhill J."/>
            <person name="Temple L.M."/>
        </authorList>
    </citation>
    <scope>NUCLEOTIDE SEQUENCE [LARGE SCALE GENOMIC DNA]</scope>
    <source>
        <strain>197N</strain>
    </source>
</reference>